<protein>
    <recommendedName>
        <fullName evidence="1">Gamma-glutamyl phosphate reductase</fullName>
        <shortName evidence="1">GPR</shortName>
        <ecNumber evidence="1">1.2.1.41</ecNumber>
    </recommendedName>
    <alternativeName>
        <fullName evidence="1">Glutamate-5-semialdehyde dehydrogenase</fullName>
    </alternativeName>
    <alternativeName>
        <fullName evidence="1">Glutamyl-gamma-semialdehyde dehydrogenase</fullName>
        <shortName evidence="1">GSA dehydrogenase</shortName>
    </alternativeName>
</protein>
<name>PROA_SULSY</name>
<accession>B2V9F3</accession>
<reference key="1">
    <citation type="journal article" date="2009" name="J. Bacteriol.">
        <title>Complete and draft genome sequences of six members of the Aquificales.</title>
        <authorList>
            <person name="Reysenbach A.-L."/>
            <person name="Hamamura N."/>
            <person name="Podar M."/>
            <person name="Griffiths E."/>
            <person name="Ferreira S."/>
            <person name="Hochstein R."/>
            <person name="Heidelberg J."/>
            <person name="Johnson J."/>
            <person name="Mead D."/>
            <person name="Pohorille A."/>
            <person name="Sarmiento M."/>
            <person name="Schweighofer K."/>
            <person name="Seshadri R."/>
            <person name="Voytek M.A."/>
        </authorList>
    </citation>
    <scope>NUCLEOTIDE SEQUENCE [LARGE SCALE GENOMIC DNA]</scope>
    <source>
        <strain>YO3AOP1</strain>
    </source>
</reference>
<sequence>MDSRQYAENIAKKAKNTVRKLSSLTTKTKNDALLRTAELLLERKSQIIEENKKDLELAEKKGYSKALLDRLALDDKRINQMVQVLKDVAALPDPVGEIINMWTRPNGLKVGQMRVPLGVILIIYEARPNVTIEAASLCMKSSNAVILKGGSETINSNRILVDIIKQACRETCFPEEAVQFVDTTDREVVNHLLKLEGLIDVAIPRGGESLIRAVAENSKIPVIKHYKGVCNLYVDDEADMEKALNIAYNAKVQRPSVCNAIENLVVHKKIADKFLPEIAYYFGKAGVEMRCDEYSYNLLINHPKAKDTEIVPAKEEDYYEEFLDLIIAVKVVDSLDEAIDFIEKYGSHHSDAIVTENYTKGMKFIQDVDSAAVYINASTRFTDGNEFGLGAEMGISTDKIHARGPMALKELTIPKFIVFGNGQLRENVGIPKDESEIKIDTNACSL</sequence>
<feature type="chain" id="PRO_1000193667" description="Gamma-glutamyl phosphate reductase">
    <location>
        <begin position="1"/>
        <end position="446"/>
    </location>
</feature>
<organism>
    <name type="scientific">Sulfurihydrogenibium sp. (strain YO3AOP1)</name>
    <dbReference type="NCBI Taxonomy" id="436114"/>
    <lineage>
        <taxon>Bacteria</taxon>
        <taxon>Pseudomonadati</taxon>
        <taxon>Aquificota</taxon>
        <taxon>Aquificia</taxon>
        <taxon>Aquificales</taxon>
        <taxon>Hydrogenothermaceae</taxon>
        <taxon>Sulfurihydrogenibium</taxon>
    </lineage>
</organism>
<comment type="function">
    <text evidence="1">Catalyzes the NADPH-dependent reduction of L-glutamate 5-phosphate into L-glutamate 5-semialdehyde and phosphate. The product spontaneously undergoes cyclization to form 1-pyrroline-5-carboxylate.</text>
</comment>
<comment type="catalytic activity">
    <reaction evidence="1">
        <text>L-glutamate 5-semialdehyde + phosphate + NADP(+) = L-glutamyl 5-phosphate + NADPH + H(+)</text>
        <dbReference type="Rhea" id="RHEA:19541"/>
        <dbReference type="ChEBI" id="CHEBI:15378"/>
        <dbReference type="ChEBI" id="CHEBI:43474"/>
        <dbReference type="ChEBI" id="CHEBI:57783"/>
        <dbReference type="ChEBI" id="CHEBI:58066"/>
        <dbReference type="ChEBI" id="CHEBI:58274"/>
        <dbReference type="ChEBI" id="CHEBI:58349"/>
        <dbReference type="EC" id="1.2.1.41"/>
    </reaction>
</comment>
<comment type="pathway">
    <text evidence="1">Amino-acid biosynthesis; L-proline biosynthesis; L-glutamate 5-semialdehyde from L-glutamate: step 2/2.</text>
</comment>
<comment type="subcellular location">
    <subcellularLocation>
        <location evidence="1">Cytoplasm</location>
    </subcellularLocation>
</comment>
<comment type="similarity">
    <text evidence="1">Belongs to the gamma-glutamyl phosphate reductase family.</text>
</comment>
<evidence type="ECO:0000255" key="1">
    <source>
        <dbReference type="HAMAP-Rule" id="MF_00412"/>
    </source>
</evidence>
<dbReference type="EC" id="1.2.1.41" evidence="1"/>
<dbReference type="EMBL" id="CP001080">
    <property type="protein sequence ID" value="ACD66576.1"/>
    <property type="molecule type" value="Genomic_DNA"/>
</dbReference>
<dbReference type="RefSeq" id="WP_012459647.1">
    <property type="nucleotide sequence ID" value="NC_010730.1"/>
</dbReference>
<dbReference type="SMR" id="B2V9F3"/>
<dbReference type="STRING" id="436114.SYO3AOP1_0953"/>
<dbReference type="KEGG" id="sul:SYO3AOP1_0953"/>
<dbReference type="eggNOG" id="COG0014">
    <property type="taxonomic scope" value="Bacteria"/>
</dbReference>
<dbReference type="HOGENOM" id="CLU_030231_0_0_0"/>
<dbReference type="UniPathway" id="UPA00098">
    <property type="reaction ID" value="UER00360"/>
</dbReference>
<dbReference type="GO" id="GO:0005737">
    <property type="term" value="C:cytoplasm"/>
    <property type="evidence" value="ECO:0007669"/>
    <property type="project" value="UniProtKB-SubCell"/>
</dbReference>
<dbReference type="GO" id="GO:0004350">
    <property type="term" value="F:glutamate-5-semialdehyde dehydrogenase activity"/>
    <property type="evidence" value="ECO:0007669"/>
    <property type="project" value="UniProtKB-UniRule"/>
</dbReference>
<dbReference type="GO" id="GO:0050661">
    <property type="term" value="F:NADP binding"/>
    <property type="evidence" value="ECO:0007669"/>
    <property type="project" value="InterPro"/>
</dbReference>
<dbReference type="GO" id="GO:0055129">
    <property type="term" value="P:L-proline biosynthetic process"/>
    <property type="evidence" value="ECO:0007669"/>
    <property type="project" value="UniProtKB-UniRule"/>
</dbReference>
<dbReference type="CDD" id="cd07079">
    <property type="entry name" value="ALDH_F18-19_ProA-GPR"/>
    <property type="match status" value="1"/>
</dbReference>
<dbReference type="FunFam" id="3.40.309.10:FF:000006">
    <property type="entry name" value="Gamma-glutamyl phosphate reductase"/>
    <property type="match status" value="1"/>
</dbReference>
<dbReference type="Gene3D" id="3.40.605.10">
    <property type="entry name" value="Aldehyde Dehydrogenase, Chain A, domain 1"/>
    <property type="match status" value="1"/>
</dbReference>
<dbReference type="Gene3D" id="3.40.309.10">
    <property type="entry name" value="Aldehyde Dehydrogenase, Chain A, domain 2"/>
    <property type="match status" value="1"/>
</dbReference>
<dbReference type="HAMAP" id="MF_00412">
    <property type="entry name" value="ProA"/>
    <property type="match status" value="1"/>
</dbReference>
<dbReference type="InterPro" id="IPR016161">
    <property type="entry name" value="Ald_DH/histidinol_DH"/>
</dbReference>
<dbReference type="InterPro" id="IPR016163">
    <property type="entry name" value="Ald_DH_C"/>
</dbReference>
<dbReference type="InterPro" id="IPR016162">
    <property type="entry name" value="Ald_DH_N"/>
</dbReference>
<dbReference type="InterPro" id="IPR015590">
    <property type="entry name" value="Aldehyde_DH_dom"/>
</dbReference>
<dbReference type="InterPro" id="IPR020593">
    <property type="entry name" value="G-glutamylP_reductase_CS"/>
</dbReference>
<dbReference type="InterPro" id="IPR012134">
    <property type="entry name" value="Glu-5-SA_DH"/>
</dbReference>
<dbReference type="InterPro" id="IPR000965">
    <property type="entry name" value="GPR_dom"/>
</dbReference>
<dbReference type="NCBIfam" id="NF001221">
    <property type="entry name" value="PRK00197.1"/>
    <property type="match status" value="1"/>
</dbReference>
<dbReference type="NCBIfam" id="TIGR00407">
    <property type="entry name" value="proA"/>
    <property type="match status" value="1"/>
</dbReference>
<dbReference type="PANTHER" id="PTHR11063:SF8">
    <property type="entry name" value="DELTA-1-PYRROLINE-5-CARBOXYLATE SYNTHASE"/>
    <property type="match status" value="1"/>
</dbReference>
<dbReference type="PANTHER" id="PTHR11063">
    <property type="entry name" value="GLUTAMATE SEMIALDEHYDE DEHYDROGENASE"/>
    <property type="match status" value="1"/>
</dbReference>
<dbReference type="Pfam" id="PF00171">
    <property type="entry name" value="Aldedh"/>
    <property type="match status" value="1"/>
</dbReference>
<dbReference type="PIRSF" id="PIRSF000151">
    <property type="entry name" value="GPR"/>
    <property type="match status" value="1"/>
</dbReference>
<dbReference type="SUPFAM" id="SSF53720">
    <property type="entry name" value="ALDH-like"/>
    <property type="match status" value="1"/>
</dbReference>
<dbReference type="PROSITE" id="PS01223">
    <property type="entry name" value="PROA"/>
    <property type="match status" value="1"/>
</dbReference>
<keyword id="KW-0028">Amino-acid biosynthesis</keyword>
<keyword id="KW-0963">Cytoplasm</keyword>
<keyword id="KW-0521">NADP</keyword>
<keyword id="KW-0560">Oxidoreductase</keyword>
<keyword id="KW-0641">Proline biosynthesis</keyword>
<proteinExistence type="inferred from homology"/>
<gene>
    <name evidence="1" type="primary">proA</name>
    <name type="ordered locus">SYO3AOP1_0953</name>
</gene>